<protein>
    <recommendedName>
        <fullName evidence="1">Large ribosomal subunit protein bL20</fullName>
    </recommendedName>
    <alternativeName>
        <fullName evidence="2">50S ribosomal protein L20</fullName>
    </alternativeName>
</protein>
<dbReference type="EMBL" id="CP000860">
    <property type="protein sequence ID" value="ACA59890.1"/>
    <property type="molecule type" value="Genomic_DNA"/>
</dbReference>
<dbReference type="RefSeq" id="WP_012302475.1">
    <property type="nucleotide sequence ID" value="NC_010424.1"/>
</dbReference>
<dbReference type="SMR" id="B1I4I8"/>
<dbReference type="STRING" id="477974.Daud_1381"/>
<dbReference type="KEGG" id="dau:Daud_1381"/>
<dbReference type="eggNOG" id="COG0292">
    <property type="taxonomic scope" value="Bacteria"/>
</dbReference>
<dbReference type="HOGENOM" id="CLU_123265_0_1_9"/>
<dbReference type="OrthoDB" id="9808966at2"/>
<dbReference type="Proteomes" id="UP000008544">
    <property type="component" value="Chromosome"/>
</dbReference>
<dbReference type="GO" id="GO:1990904">
    <property type="term" value="C:ribonucleoprotein complex"/>
    <property type="evidence" value="ECO:0007669"/>
    <property type="project" value="UniProtKB-KW"/>
</dbReference>
<dbReference type="GO" id="GO:0005840">
    <property type="term" value="C:ribosome"/>
    <property type="evidence" value="ECO:0007669"/>
    <property type="project" value="UniProtKB-KW"/>
</dbReference>
<dbReference type="GO" id="GO:0019843">
    <property type="term" value="F:rRNA binding"/>
    <property type="evidence" value="ECO:0007669"/>
    <property type="project" value="UniProtKB-UniRule"/>
</dbReference>
<dbReference type="GO" id="GO:0003735">
    <property type="term" value="F:structural constituent of ribosome"/>
    <property type="evidence" value="ECO:0007669"/>
    <property type="project" value="InterPro"/>
</dbReference>
<dbReference type="GO" id="GO:0000027">
    <property type="term" value="P:ribosomal large subunit assembly"/>
    <property type="evidence" value="ECO:0007669"/>
    <property type="project" value="UniProtKB-UniRule"/>
</dbReference>
<dbReference type="GO" id="GO:0006412">
    <property type="term" value="P:translation"/>
    <property type="evidence" value="ECO:0007669"/>
    <property type="project" value="InterPro"/>
</dbReference>
<dbReference type="CDD" id="cd07026">
    <property type="entry name" value="Ribosomal_L20"/>
    <property type="match status" value="1"/>
</dbReference>
<dbReference type="FunFam" id="1.10.1900.20:FF:000001">
    <property type="entry name" value="50S ribosomal protein L20"/>
    <property type="match status" value="1"/>
</dbReference>
<dbReference type="Gene3D" id="6.10.160.10">
    <property type="match status" value="1"/>
</dbReference>
<dbReference type="Gene3D" id="1.10.1900.20">
    <property type="entry name" value="Ribosomal protein L20"/>
    <property type="match status" value="1"/>
</dbReference>
<dbReference type="HAMAP" id="MF_00382">
    <property type="entry name" value="Ribosomal_bL20"/>
    <property type="match status" value="1"/>
</dbReference>
<dbReference type="InterPro" id="IPR005813">
    <property type="entry name" value="Ribosomal_bL20"/>
</dbReference>
<dbReference type="InterPro" id="IPR049946">
    <property type="entry name" value="RIBOSOMAL_L20_CS"/>
</dbReference>
<dbReference type="InterPro" id="IPR035566">
    <property type="entry name" value="Ribosomal_protein_bL20_C"/>
</dbReference>
<dbReference type="NCBIfam" id="TIGR01032">
    <property type="entry name" value="rplT_bact"/>
    <property type="match status" value="1"/>
</dbReference>
<dbReference type="PANTHER" id="PTHR10986">
    <property type="entry name" value="39S RIBOSOMAL PROTEIN L20"/>
    <property type="match status" value="1"/>
</dbReference>
<dbReference type="Pfam" id="PF00453">
    <property type="entry name" value="Ribosomal_L20"/>
    <property type="match status" value="1"/>
</dbReference>
<dbReference type="PRINTS" id="PR00062">
    <property type="entry name" value="RIBOSOMALL20"/>
</dbReference>
<dbReference type="SUPFAM" id="SSF74731">
    <property type="entry name" value="Ribosomal protein L20"/>
    <property type="match status" value="1"/>
</dbReference>
<dbReference type="PROSITE" id="PS00937">
    <property type="entry name" value="RIBOSOMAL_L20"/>
    <property type="match status" value="1"/>
</dbReference>
<proteinExistence type="inferred from homology"/>
<reference key="1">
    <citation type="submission" date="2007-10" db="EMBL/GenBank/DDBJ databases">
        <title>Complete sequence of chromosome of Desulforudis audaxviator MP104C.</title>
        <authorList>
            <person name="Copeland A."/>
            <person name="Lucas S."/>
            <person name="Lapidus A."/>
            <person name="Barry K."/>
            <person name="Glavina del Rio T."/>
            <person name="Dalin E."/>
            <person name="Tice H."/>
            <person name="Bruce D."/>
            <person name="Pitluck S."/>
            <person name="Lowry S.R."/>
            <person name="Larimer F."/>
            <person name="Land M.L."/>
            <person name="Hauser L."/>
            <person name="Kyrpides N."/>
            <person name="Ivanova N.N."/>
            <person name="Richardson P."/>
        </authorList>
    </citation>
    <scope>NUCLEOTIDE SEQUENCE [LARGE SCALE GENOMIC DNA]</scope>
    <source>
        <strain>MP104C</strain>
    </source>
</reference>
<gene>
    <name evidence="1" type="primary">rplT</name>
    <name type="ordered locus">Daud_1381</name>
</gene>
<accession>B1I4I8</accession>
<evidence type="ECO:0000255" key="1">
    <source>
        <dbReference type="HAMAP-Rule" id="MF_00382"/>
    </source>
</evidence>
<evidence type="ECO:0000305" key="2"/>
<name>RL20_DESAP</name>
<feature type="chain" id="PRO_1000122306" description="Large ribosomal subunit protein bL20">
    <location>
        <begin position="1"/>
        <end position="120"/>
    </location>
</feature>
<organism>
    <name type="scientific">Desulforudis audaxviator (strain MP104C)</name>
    <dbReference type="NCBI Taxonomy" id="477974"/>
    <lineage>
        <taxon>Bacteria</taxon>
        <taxon>Bacillati</taxon>
        <taxon>Bacillota</taxon>
        <taxon>Clostridia</taxon>
        <taxon>Thermoanaerobacterales</taxon>
        <taxon>Candidatus Desulforudaceae</taxon>
        <taxon>Candidatus Desulforudis</taxon>
    </lineage>
</organism>
<comment type="function">
    <text evidence="1">Binds directly to 23S ribosomal RNA and is necessary for the in vitro assembly process of the 50S ribosomal subunit. It is not involved in the protein synthesizing functions of that subunit.</text>
</comment>
<comment type="similarity">
    <text evidence="1">Belongs to the bacterial ribosomal protein bL20 family.</text>
</comment>
<keyword id="KW-1185">Reference proteome</keyword>
<keyword id="KW-0687">Ribonucleoprotein</keyword>
<keyword id="KW-0689">Ribosomal protein</keyword>
<keyword id="KW-0694">RNA-binding</keyword>
<keyword id="KW-0699">rRNA-binding</keyword>
<sequence>MPRVKNAVVARKRHKKVLKLAKGYWGAKSKLYRVANQQVMRSLLYAYRDRRAKKRDFRRLWITRINAAARLNGMSYNRFIEGLRRAGVEINRKVLAELAVKDQAAFGQLVQVAKAQLESK</sequence>